<protein>
    <recommendedName>
        <fullName evidence="1">Aspartyl/glutamyl-tRNA(Asn/Gln) amidotransferase subunit B</fullName>
        <shortName evidence="1">Asp/Glu-ADT subunit B</shortName>
        <ecNumber evidence="1">6.3.5.-</ecNumber>
    </recommendedName>
</protein>
<name>GATB_COXB1</name>
<accession>B6J4H6</accession>
<reference key="1">
    <citation type="journal article" date="2009" name="Infect. Immun.">
        <title>Comparative genomics reveal extensive transposon-mediated genomic plasticity and diversity among potential effector proteins within the genus Coxiella.</title>
        <authorList>
            <person name="Beare P.A."/>
            <person name="Unsworth N."/>
            <person name="Andoh M."/>
            <person name="Voth D.E."/>
            <person name="Omsland A."/>
            <person name="Gilk S.D."/>
            <person name="Williams K.P."/>
            <person name="Sobral B.W."/>
            <person name="Kupko J.J. III"/>
            <person name="Porcella S.F."/>
            <person name="Samuel J.E."/>
            <person name="Heinzen R.A."/>
        </authorList>
    </citation>
    <scope>NUCLEOTIDE SEQUENCE [LARGE SCALE GENOMIC DNA]</scope>
    <source>
        <strain>CbuK_Q154</strain>
    </source>
</reference>
<feature type="chain" id="PRO_1000095206" description="Aspartyl/glutamyl-tRNA(Asn/Gln) amidotransferase subunit B">
    <location>
        <begin position="1"/>
        <end position="477"/>
    </location>
</feature>
<dbReference type="EC" id="6.3.5.-" evidence="1"/>
<dbReference type="EMBL" id="CP001020">
    <property type="protein sequence ID" value="ACJ20841.1"/>
    <property type="molecule type" value="Genomic_DNA"/>
</dbReference>
<dbReference type="RefSeq" id="WP_005772006.1">
    <property type="nucleotide sequence ID" value="NC_011528.1"/>
</dbReference>
<dbReference type="SMR" id="B6J4H6"/>
<dbReference type="KEGG" id="cbc:CbuK_1706"/>
<dbReference type="HOGENOM" id="CLU_019240_0_0_6"/>
<dbReference type="GO" id="GO:0050566">
    <property type="term" value="F:asparaginyl-tRNA synthase (glutamine-hydrolyzing) activity"/>
    <property type="evidence" value="ECO:0007669"/>
    <property type="project" value="RHEA"/>
</dbReference>
<dbReference type="GO" id="GO:0005524">
    <property type="term" value="F:ATP binding"/>
    <property type="evidence" value="ECO:0007669"/>
    <property type="project" value="UniProtKB-KW"/>
</dbReference>
<dbReference type="GO" id="GO:0050567">
    <property type="term" value="F:glutaminyl-tRNA synthase (glutamine-hydrolyzing) activity"/>
    <property type="evidence" value="ECO:0007669"/>
    <property type="project" value="UniProtKB-UniRule"/>
</dbReference>
<dbReference type="GO" id="GO:0070681">
    <property type="term" value="P:glutaminyl-tRNAGln biosynthesis via transamidation"/>
    <property type="evidence" value="ECO:0007669"/>
    <property type="project" value="TreeGrafter"/>
</dbReference>
<dbReference type="GO" id="GO:0006412">
    <property type="term" value="P:translation"/>
    <property type="evidence" value="ECO:0007669"/>
    <property type="project" value="UniProtKB-UniRule"/>
</dbReference>
<dbReference type="FunFam" id="1.10.10.410:FF:000001">
    <property type="entry name" value="Aspartyl/glutamyl-tRNA(Asn/Gln) amidotransferase subunit B"/>
    <property type="match status" value="1"/>
</dbReference>
<dbReference type="FunFam" id="1.10.150.380:FF:000001">
    <property type="entry name" value="Aspartyl/glutamyl-tRNA(Asn/Gln) amidotransferase subunit B"/>
    <property type="match status" value="1"/>
</dbReference>
<dbReference type="Gene3D" id="1.10.10.410">
    <property type="match status" value="1"/>
</dbReference>
<dbReference type="Gene3D" id="1.10.150.380">
    <property type="entry name" value="GatB domain, N-terminal subdomain"/>
    <property type="match status" value="1"/>
</dbReference>
<dbReference type="HAMAP" id="MF_00121">
    <property type="entry name" value="GatB"/>
    <property type="match status" value="1"/>
</dbReference>
<dbReference type="InterPro" id="IPR017959">
    <property type="entry name" value="Asn/Gln-tRNA_amidoTrfase_suB/E"/>
</dbReference>
<dbReference type="InterPro" id="IPR006075">
    <property type="entry name" value="Asn/Gln-tRNA_Trfase_suB/E_cat"/>
</dbReference>
<dbReference type="InterPro" id="IPR018027">
    <property type="entry name" value="Asn/Gln_amidotransferase"/>
</dbReference>
<dbReference type="InterPro" id="IPR003789">
    <property type="entry name" value="Asn/Gln_tRNA_amidoTrase-B-like"/>
</dbReference>
<dbReference type="InterPro" id="IPR004413">
    <property type="entry name" value="GatB"/>
</dbReference>
<dbReference type="InterPro" id="IPR042114">
    <property type="entry name" value="GatB_C_1"/>
</dbReference>
<dbReference type="InterPro" id="IPR023168">
    <property type="entry name" value="GatB_Yqey_C_2"/>
</dbReference>
<dbReference type="InterPro" id="IPR017958">
    <property type="entry name" value="Gln-tRNA_amidoTrfase_suB_CS"/>
</dbReference>
<dbReference type="InterPro" id="IPR014746">
    <property type="entry name" value="Gln_synth/guanido_kin_cat_dom"/>
</dbReference>
<dbReference type="NCBIfam" id="TIGR00133">
    <property type="entry name" value="gatB"/>
    <property type="match status" value="1"/>
</dbReference>
<dbReference type="NCBIfam" id="NF004012">
    <property type="entry name" value="PRK05477.1-2"/>
    <property type="match status" value="1"/>
</dbReference>
<dbReference type="NCBIfam" id="NF004014">
    <property type="entry name" value="PRK05477.1-4"/>
    <property type="match status" value="1"/>
</dbReference>
<dbReference type="NCBIfam" id="NF004015">
    <property type="entry name" value="PRK05477.1-5"/>
    <property type="match status" value="1"/>
</dbReference>
<dbReference type="PANTHER" id="PTHR11659">
    <property type="entry name" value="GLUTAMYL-TRNA GLN AMIDOTRANSFERASE SUBUNIT B MITOCHONDRIAL AND PROKARYOTIC PET112-RELATED"/>
    <property type="match status" value="1"/>
</dbReference>
<dbReference type="PANTHER" id="PTHR11659:SF0">
    <property type="entry name" value="GLUTAMYL-TRNA(GLN) AMIDOTRANSFERASE SUBUNIT B, MITOCHONDRIAL"/>
    <property type="match status" value="1"/>
</dbReference>
<dbReference type="Pfam" id="PF02934">
    <property type="entry name" value="GatB_N"/>
    <property type="match status" value="1"/>
</dbReference>
<dbReference type="Pfam" id="PF02637">
    <property type="entry name" value="GatB_Yqey"/>
    <property type="match status" value="1"/>
</dbReference>
<dbReference type="SMART" id="SM00845">
    <property type="entry name" value="GatB_Yqey"/>
    <property type="match status" value="1"/>
</dbReference>
<dbReference type="SUPFAM" id="SSF89095">
    <property type="entry name" value="GatB/YqeY motif"/>
    <property type="match status" value="1"/>
</dbReference>
<dbReference type="SUPFAM" id="SSF55931">
    <property type="entry name" value="Glutamine synthetase/guanido kinase"/>
    <property type="match status" value="1"/>
</dbReference>
<dbReference type="PROSITE" id="PS01234">
    <property type="entry name" value="GATB"/>
    <property type="match status" value="1"/>
</dbReference>
<organism>
    <name type="scientific">Coxiella burnetii (strain CbuK_Q154)</name>
    <name type="common">Coxiella burnetii (strain Q154)</name>
    <dbReference type="NCBI Taxonomy" id="434924"/>
    <lineage>
        <taxon>Bacteria</taxon>
        <taxon>Pseudomonadati</taxon>
        <taxon>Pseudomonadota</taxon>
        <taxon>Gammaproteobacteria</taxon>
        <taxon>Legionellales</taxon>
        <taxon>Coxiellaceae</taxon>
        <taxon>Coxiella</taxon>
    </lineage>
</organism>
<gene>
    <name evidence="1" type="primary">gatB</name>
    <name type="ordered locus">CbuK_1706</name>
</gene>
<proteinExistence type="inferred from homology"/>
<comment type="function">
    <text evidence="1">Allows the formation of correctly charged Asn-tRNA(Asn) or Gln-tRNA(Gln) through the transamidation of misacylated Asp-tRNA(Asn) or Glu-tRNA(Gln) in organisms which lack either or both of asparaginyl-tRNA or glutaminyl-tRNA synthetases. The reaction takes place in the presence of glutamine and ATP through an activated phospho-Asp-tRNA(Asn) or phospho-Glu-tRNA(Gln).</text>
</comment>
<comment type="catalytic activity">
    <reaction evidence="1">
        <text>L-glutamyl-tRNA(Gln) + L-glutamine + ATP + H2O = L-glutaminyl-tRNA(Gln) + L-glutamate + ADP + phosphate + H(+)</text>
        <dbReference type="Rhea" id="RHEA:17521"/>
        <dbReference type="Rhea" id="RHEA-COMP:9681"/>
        <dbReference type="Rhea" id="RHEA-COMP:9684"/>
        <dbReference type="ChEBI" id="CHEBI:15377"/>
        <dbReference type="ChEBI" id="CHEBI:15378"/>
        <dbReference type="ChEBI" id="CHEBI:29985"/>
        <dbReference type="ChEBI" id="CHEBI:30616"/>
        <dbReference type="ChEBI" id="CHEBI:43474"/>
        <dbReference type="ChEBI" id="CHEBI:58359"/>
        <dbReference type="ChEBI" id="CHEBI:78520"/>
        <dbReference type="ChEBI" id="CHEBI:78521"/>
        <dbReference type="ChEBI" id="CHEBI:456216"/>
    </reaction>
</comment>
<comment type="catalytic activity">
    <reaction evidence="1">
        <text>L-aspartyl-tRNA(Asn) + L-glutamine + ATP + H2O = L-asparaginyl-tRNA(Asn) + L-glutamate + ADP + phosphate + 2 H(+)</text>
        <dbReference type="Rhea" id="RHEA:14513"/>
        <dbReference type="Rhea" id="RHEA-COMP:9674"/>
        <dbReference type="Rhea" id="RHEA-COMP:9677"/>
        <dbReference type="ChEBI" id="CHEBI:15377"/>
        <dbReference type="ChEBI" id="CHEBI:15378"/>
        <dbReference type="ChEBI" id="CHEBI:29985"/>
        <dbReference type="ChEBI" id="CHEBI:30616"/>
        <dbReference type="ChEBI" id="CHEBI:43474"/>
        <dbReference type="ChEBI" id="CHEBI:58359"/>
        <dbReference type="ChEBI" id="CHEBI:78515"/>
        <dbReference type="ChEBI" id="CHEBI:78516"/>
        <dbReference type="ChEBI" id="CHEBI:456216"/>
    </reaction>
</comment>
<comment type="subunit">
    <text evidence="1">Heterotrimer of A, B and C subunits.</text>
</comment>
<comment type="similarity">
    <text evidence="1">Belongs to the GatB/GatE family. GatB subfamily.</text>
</comment>
<keyword id="KW-0067">ATP-binding</keyword>
<keyword id="KW-0436">Ligase</keyword>
<keyword id="KW-0547">Nucleotide-binding</keyword>
<keyword id="KW-0648">Protein biosynthesis</keyword>
<evidence type="ECO:0000255" key="1">
    <source>
        <dbReference type="HAMAP-Rule" id="MF_00121"/>
    </source>
</evidence>
<sequence length="477" mass="53424">MEWEPVIGLEVHVQLRTQSKIFSGAATAYGAEPNTQACAIDLGLPGVLPVLNKEAVKLAVCFGLSVNASIPPYSIFARKNYFYPDLPKGYQISQYNFPIVQNGHLDIENEDGTTKRIGITRAHLEEDAGKSFHEGMQGYSGIDFNRAGTPLLEIVSEPDIRSAQEAVAYLKALHSLVRYIGVSDANMQEGAFRCDVNISLRPKGEEKFGTRAEIKNVNSFRFVERAILFEINRQKEILENGGTIVQETRLYDAVQDETRSMRTKEEAHDYRYFPDPDLLPVEIGPEFIEAVKNQLPELPWEKRKRFAASYQLSNYDVKLLTTQIEIANYFETVLKIDKTIPPKLAANWINGDLAAALNKNNLSITQSPINAEQLAGLLHRIADNTLSGSMGKQVFETMWGGEGDADTIIERHGLKQITDTEALEKIIDEVIENNPTQVEQYRSGKDKLIAFFVGQVMKATKGKANPQQVNELFKKKL</sequence>